<protein>
    <recommendedName>
        <fullName evidence="1">Phosphoribosyl-AMP cyclohydrolase</fullName>
        <shortName evidence="1">PRA-CH</shortName>
        <ecNumber evidence="1">3.5.4.19</ecNumber>
    </recommendedName>
</protein>
<organism>
    <name type="scientific">Mycobacterium bovis (strain ATCC BAA-935 / AF2122/97)</name>
    <dbReference type="NCBI Taxonomy" id="233413"/>
    <lineage>
        <taxon>Bacteria</taxon>
        <taxon>Bacillati</taxon>
        <taxon>Actinomycetota</taxon>
        <taxon>Actinomycetes</taxon>
        <taxon>Mycobacteriales</taxon>
        <taxon>Mycobacteriaceae</taxon>
        <taxon>Mycobacterium</taxon>
        <taxon>Mycobacterium tuberculosis complex</taxon>
    </lineage>
</organism>
<keyword id="KW-0028">Amino-acid biosynthesis</keyword>
<keyword id="KW-0963">Cytoplasm</keyword>
<keyword id="KW-0368">Histidine biosynthesis</keyword>
<keyword id="KW-0378">Hydrolase</keyword>
<keyword id="KW-0460">Magnesium</keyword>
<keyword id="KW-0479">Metal-binding</keyword>
<keyword id="KW-1185">Reference proteome</keyword>
<keyword id="KW-0862">Zinc</keyword>
<name>HIS3_MYCBO</name>
<gene>
    <name evidence="1" type="primary">hisI</name>
    <name type="ordered locus">BQ2027_MB1632</name>
</gene>
<reference key="1">
    <citation type="journal article" date="2003" name="Proc. Natl. Acad. Sci. U.S.A.">
        <title>The complete genome sequence of Mycobacterium bovis.</title>
        <authorList>
            <person name="Garnier T."/>
            <person name="Eiglmeier K."/>
            <person name="Camus J.-C."/>
            <person name="Medina N."/>
            <person name="Mansoor H."/>
            <person name="Pryor M."/>
            <person name="Duthoy S."/>
            <person name="Grondin S."/>
            <person name="Lacroix C."/>
            <person name="Monsempe C."/>
            <person name="Simon S."/>
            <person name="Harris B."/>
            <person name="Atkin R."/>
            <person name="Doggett J."/>
            <person name="Mayes R."/>
            <person name="Keating L."/>
            <person name="Wheeler P.R."/>
            <person name="Parkhill J."/>
            <person name="Barrell B.G."/>
            <person name="Cole S.T."/>
            <person name="Gordon S.V."/>
            <person name="Hewinson R.G."/>
        </authorList>
    </citation>
    <scope>NUCLEOTIDE SEQUENCE [LARGE SCALE GENOMIC DNA]</scope>
    <source>
        <strain>ATCC BAA-935 / AF2122/97</strain>
    </source>
</reference>
<reference key="2">
    <citation type="journal article" date="2017" name="Genome Announc.">
        <title>Updated reference genome sequence and annotation of Mycobacterium bovis AF2122/97.</title>
        <authorList>
            <person name="Malone K.M."/>
            <person name="Farrell D."/>
            <person name="Stuber T.P."/>
            <person name="Schubert O.T."/>
            <person name="Aebersold R."/>
            <person name="Robbe-Austerman S."/>
            <person name="Gordon S.V."/>
        </authorList>
    </citation>
    <scope>NUCLEOTIDE SEQUENCE [LARGE SCALE GENOMIC DNA]</scope>
    <scope>GENOME REANNOTATION</scope>
    <source>
        <strain>ATCC BAA-935 / AF2122/97</strain>
    </source>
</reference>
<feature type="chain" id="PRO_0000136487" description="Phosphoribosyl-AMP cyclohydrolase">
    <location>
        <begin position="1"/>
        <end position="115"/>
    </location>
</feature>
<feature type="binding site" evidence="1">
    <location>
        <position position="80"/>
    </location>
    <ligand>
        <name>Mg(2+)</name>
        <dbReference type="ChEBI" id="CHEBI:18420"/>
    </ligand>
</feature>
<feature type="binding site" evidence="1">
    <location>
        <position position="81"/>
    </location>
    <ligand>
        <name>Zn(2+)</name>
        <dbReference type="ChEBI" id="CHEBI:29105"/>
        <note>ligand shared between dimeric partners</note>
    </ligand>
</feature>
<feature type="binding site" evidence="1">
    <location>
        <position position="82"/>
    </location>
    <ligand>
        <name>Mg(2+)</name>
        <dbReference type="ChEBI" id="CHEBI:18420"/>
    </ligand>
</feature>
<feature type="binding site" evidence="1">
    <location>
        <position position="84"/>
    </location>
    <ligand>
        <name>Mg(2+)</name>
        <dbReference type="ChEBI" id="CHEBI:18420"/>
    </ligand>
</feature>
<feature type="binding site" evidence="1">
    <location>
        <position position="97"/>
    </location>
    <ligand>
        <name>Zn(2+)</name>
        <dbReference type="ChEBI" id="CHEBI:29105"/>
        <note>ligand shared between dimeric partners</note>
    </ligand>
</feature>
<feature type="binding site" evidence="1">
    <location>
        <position position="104"/>
    </location>
    <ligand>
        <name>Zn(2+)</name>
        <dbReference type="ChEBI" id="CHEBI:29105"/>
        <note>ligand shared between dimeric partners</note>
    </ligand>
</feature>
<accession>P0A5B4</accession>
<accession>A0A1R3XZ64</accession>
<accession>O53909</accession>
<accession>X2BIF1</accession>
<sequence>MTLDPKIAARLKRNADGLVTAVVQERGSGDVLMVAWMNDEALARTLQTREATYYSRSRAEQWVKGATSGHTQHVHSVRLDCDGDAVLLTVDQVGGACHTGDHSCFDAAVLLEPDD</sequence>
<dbReference type="EC" id="3.5.4.19" evidence="1"/>
<dbReference type="EMBL" id="LT708304">
    <property type="protein sequence ID" value="SIU00236.1"/>
    <property type="molecule type" value="Genomic_DNA"/>
</dbReference>
<dbReference type="RefSeq" id="NP_855285.1">
    <property type="nucleotide sequence ID" value="NC_002945.3"/>
</dbReference>
<dbReference type="RefSeq" id="WP_003407963.1">
    <property type="nucleotide sequence ID" value="NC_002945.4"/>
</dbReference>
<dbReference type="SMR" id="P0A5B4"/>
<dbReference type="GeneID" id="45425574"/>
<dbReference type="KEGG" id="mbo:BQ2027_MB1632"/>
<dbReference type="PATRIC" id="fig|233413.5.peg.1781"/>
<dbReference type="UniPathway" id="UPA00031">
    <property type="reaction ID" value="UER00008"/>
</dbReference>
<dbReference type="Proteomes" id="UP000001419">
    <property type="component" value="Chromosome"/>
</dbReference>
<dbReference type="GO" id="GO:0005737">
    <property type="term" value="C:cytoplasm"/>
    <property type="evidence" value="ECO:0007669"/>
    <property type="project" value="UniProtKB-SubCell"/>
</dbReference>
<dbReference type="GO" id="GO:0000287">
    <property type="term" value="F:magnesium ion binding"/>
    <property type="evidence" value="ECO:0007669"/>
    <property type="project" value="UniProtKB-UniRule"/>
</dbReference>
<dbReference type="GO" id="GO:0004635">
    <property type="term" value="F:phosphoribosyl-AMP cyclohydrolase activity"/>
    <property type="evidence" value="ECO:0007669"/>
    <property type="project" value="UniProtKB-UniRule"/>
</dbReference>
<dbReference type="GO" id="GO:0008270">
    <property type="term" value="F:zinc ion binding"/>
    <property type="evidence" value="ECO:0007669"/>
    <property type="project" value="UniProtKB-UniRule"/>
</dbReference>
<dbReference type="GO" id="GO:0000105">
    <property type="term" value="P:L-histidine biosynthetic process"/>
    <property type="evidence" value="ECO:0007669"/>
    <property type="project" value="UniProtKB-UniRule"/>
</dbReference>
<dbReference type="FunFam" id="3.10.20.810:FF:000001">
    <property type="entry name" value="Histidine biosynthesis bifunctional protein HisIE"/>
    <property type="match status" value="1"/>
</dbReference>
<dbReference type="Gene3D" id="3.10.20.810">
    <property type="entry name" value="Phosphoribosyl-AMP cyclohydrolase"/>
    <property type="match status" value="1"/>
</dbReference>
<dbReference type="HAMAP" id="MF_01021">
    <property type="entry name" value="HisI"/>
    <property type="match status" value="1"/>
</dbReference>
<dbReference type="InterPro" id="IPR026660">
    <property type="entry name" value="PRA-CH"/>
</dbReference>
<dbReference type="InterPro" id="IPR002496">
    <property type="entry name" value="PRib_AMP_CycHydrolase_dom"/>
</dbReference>
<dbReference type="InterPro" id="IPR038019">
    <property type="entry name" value="PRib_AMP_CycHydrolase_sf"/>
</dbReference>
<dbReference type="NCBIfam" id="NF000768">
    <property type="entry name" value="PRK00051.1"/>
    <property type="match status" value="1"/>
</dbReference>
<dbReference type="PANTHER" id="PTHR42945">
    <property type="entry name" value="HISTIDINE BIOSYNTHESIS BIFUNCTIONAL PROTEIN"/>
    <property type="match status" value="1"/>
</dbReference>
<dbReference type="PANTHER" id="PTHR42945:SF11">
    <property type="entry name" value="PHOSPHORIBOSYL-AMP CYCLOHYDROLASE"/>
    <property type="match status" value="1"/>
</dbReference>
<dbReference type="Pfam" id="PF01502">
    <property type="entry name" value="PRA-CH"/>
    <property type="match status" value="1"/>
</dbReference>
<dbReference type="SUPFAM" id="SSF141734">
    <property type="entry name" value="HisI-like"/>
    <property type="match status" value="1"/>
</dbReference>
<proteinExistence type="inferred from homology"/>
<evidence type="ECO:0000255" key="1">
    <source>
        <dbReference type="HAMAP-Rule" id="MF_01021"/>
    </source>
</evidence>
<comment type="function">
    <text evidence="1">Catalyzes the hydrolysis of the adenine ring of phosphoribosyl-AMP.</text>
</comment>
<comment type="catalytic activity">
    <reaction evidence="1">
        <text>1-(5-phospho-beta-D-ribosyl)-5'-AMP + H2O = 1-(5-phospho-beta-D-ribosyl)-5-[(5-phospho-beta-D-ribosylamino)methylideneamino]imidazole-4-carboxamide</text>
        <dbReference type="Rhea" id="RHEA:20049"/>
        <dbReference type="ChEBI" id="CHEBI:15377"/>
        <dbReference type="ChEBI" id="CHEBI:58435"/>
        <dbReference type="ChEBI" id="CHEBI:59457"/>
        <dbReference type="EC" id="3.5.4.19"/>
    </reaction>
</comment>
<comment type="cofactor">
    <cofactor evidence="1">
        <name>Mg(2+)</name>
        <dbReference type="ChEBI" id="CHEBI:18420"/>
    </cofactor>
    <text evidence="1">Binds 1 Mg(2+) ion per subunit.</text>
</comment>
<comment type="cofactor">
    <cofactor evidence="1">
        <name>Zn(2+)</name>
        <dbReference type="ChEBI" id="CHEBI:29105"/>
    </cofactor>
    <text evidence="1">Binds 1 zinc ion per subunit.</text>
</comment>
<comment type="pathway">
    <text evidence="1">Amino-acid biosynthesis; L-histidine biosynthesis; L-histidine from 5-phospho-alpha-D-ribose 1-diphosphate: step 3/9.</text>
</comment>
<comment type="subunit">
    <text evidence="1">Homodimer.</text>
</comment>
<comment type="subcellular location">
    <subcellularLocation>
        <location evidence="1">Cytoplasm</location>
    </subcellularLocation>
</comment>
<comment type="similarity">
    <text evidence="1">Belongs to the PRA-CH family.</text>
</comment>